<feature type="chain" id="PRO_0000069905" description="Neuromedin-B receptor">
    <location>
        <begin position="1"/>
        <end position="390"/>
    </location>
</feature>
<feature type="topological domain" description="Extracellular" evidence="3">
    <location>
        <begin position="1"/>
        <end position="41"/>
    </location>
</feature>
<feature type="transmembrane region" description="Helical; Name=1" evidence="3">
    <location>
        <begin position="42"/>
        <end position="65"/>
    </location>
</feature>
<feature type="topological domain" description="Cytoplasmic" evidence="3">
    <location>
        <begin position="66"/>
        <end position="79"/>
    </location>
</feature>
<feature type="transmembrane region" description="Helical; Name=2" evidence="3">
    <location>
        <begin position="80"/>
        <end position="99"/>
    </location>
</feature>
<feature type="topological domain" description="Extracellular" evidence="3">
    <location>
        <begin position="100"/>
        <end position="117"/>
    </location>
</feature>
<feature type="transmembrane region" description="Helical; Name=3" evidence="3">
    <location>
        <begin position="118"/>
        <end position="139"/>
    </location>
</feature>
<feature type="topological domain" description="Cytoplasmic" evidence="3">
    <location>
        <begin position="140"/>
        <end position="156"/>
    </location>
</feature>
<feature type="transmembrane region" description="Helical; Name=4" evidence="3">
    <location>
        <begin position="157"/>
        <end position="177"/>
    </location>
</feature>
<feature type="topological domain" description="Extracellular" evidence="3">
    <location>
        <begin position="178"/>
        <end position="211"/>
    </location>
</feature>
<feature type="transmembrane region" description="Helical; Name=5" evidence="3">
    <location>
        <begin position="212"/>
        <end position="235"/>
    </location>
</feature>
<feature type="topological domain" description="Cytoplasmic" evidence="3">
    <location>
        <begin position="236"/>
        <end position="266"/>
    </location>
</feature>
<feature type="transmembrane region" description="Helical; Name=6" evidence="3">
    <location>
        <begin position="267"/>
        <end position="287"/>
    </location>
</feature>
<feature type="topological domain" description="Extracellular" evidence="3">
    <location>
        <begin position="288"/>
        <end position="299"/>
    </location>
</feature>
<feature type="transmembrane region" description="Helical; Name=7" evidence="3">
    <location>
        <begin position="300"/>
        <end position="327"/>
    </location>
</feature>
<feature type="topological domain" description="Cytoplasmic" evidence="3">
    <location>
        <begin position="328"/>
        <end position="390"/>
    </location>
</feature>
<feature type="region of interest" description="Disordered" evidence="5">
    <location>
        <begin position="1"/>
        <end position="20"/>
    </location>
</feature>
<feature type="modified residue" description="Phosphoserine" evidence="1">
    <location>
        <position position="352"/>
    </location>
</feature>
<feature type="lipid moiety-binding region" description="S-palmitoyl cysteine" evidence="2">
    <location>
        <position position="341"/>
    </location>
</feature>
<feature type="glycosylation site" description="N-linked (GlcNAc...) asparagine" evidence="3">
    <location>
        <position position="8"/>
    </location>
</feature>
<feature type="glycosylation site" description="N-linked (GlcNAc...) asparagine" evidence="3">
    <location>
        <position position="192"/>
    </location>
</feature>
<feature type="disulfide bond" evidence="4">
    <location>
        <begin position="116"/>
        <end position="198"/>
    </location>
</feature>
<dbReference type="EMBL" id="U37058">
    <property type="protein sequence ID" value="AAA79881.1"/>
    <property type="molecule type" value="mRNA"/>
</dbReference>
<dbReference type="PIR" id="JH0374">
    <property type="entry name" value="JH0374"/>
</dbReference>
<dbReference type="RefSeq" id="NP_036931.1">
    <property type="nucleotide sequence ID" value="NM_012799.2"/>
</dbReference>
<dbReference type="RefSeq" id="XP_017444304.1">
    <property type="nucleotide sequence ID" value="XM_017588815.1"/>
</dbReference>
<dbReference type="RefSeq" id="XP_038957459.1">
    <property type="nucleotide sequence ID" value="XM_039101531.2"/>
</dbReference>
<dbReference type="RefSeq" id="XP_063137633.1">
    <property type="nucleotide sequence ID" value="XM_063281563.1"/>
</dbReference>
<dbReference type="SMR" id="P24053"/>
<dbReference type="FunCoup" id="P24053">
    <property type="interactions" value="182"/>
</dbReference>
<dbReference type="STRING" id="10116.ENSRNOP00000016215"/>
<dbReference type="BindingDB" id="P24053"/>
<dbReference type="ChEMBL" id="CHEMBL4440"/>
<dbReference type="GuidetoPHARMACOLOGY" id="38"/>
<dbReference type="GlyCosmos" id="P24053">
    <property type="glycosylation" value="2 sites, No reported glycans"/>
</dbReference>
<dbReference type="GlyGen" id="P24053">
    <property type="glycosylation" value="2 sites"/>
</dbReference>
<dbReference type="PhosphoSitePlus" id="P24053"/>
<dbReference type="Ensembl" id="ENSRNOT00000016215.7">
    <property type="protein sequence ID" value="ENSRNOP00000016215.6"/>
    <property type="gene ID" value="ENSRNOG00000012103.8"/>
</dbReference>
<dbReference type="GeneID" id="25264"/>
<dbReference type="KEGG" id="rno:25264"/>
<dbReference type="AGR" id="RGD:3181"/>
<dbReference type="CTD" id="4829"/>
<dbReference type="RGD" id="3181">
    <property type="gene designation" value="Nmbr"/>
</dbReference>
<dbReference type="GeneTree" id="ENSGT01120000271837"/>
<dbReference type="InParanoid" id="P24053"/>
<dbReference type="OMA" id="MSNSAMR"/>
<dbReference type="OrthoDB" id="10049706at2759"/>
<dbReference type="PhylomeDB" id="P24053"/>
<dbReference type="Reactome" id="R-RNO-375276">
    <property type="pathway name" value="Peptide ligand-binding receptors"/>
</dbReference>
<dbReference type="Reactome" id="R-RNO-416476">
    <property type="pathway name" value="G alpha (q) signalling events"/>
</dbReference>
<dbReference type="PRO" id="PR:P24053"/>
<dbReference type="Proteomes" id="UP000002494">
    <property type="component" value="Chromosome 1"/>
</dbReference>
<dbReference type="GO" id="GO:0005829">
    <property type="term" value="C:cytosol"/>
    <property type="evidence" value="ECO:0007669"/>
    <property type="project" value="Ensembl"/>
</dbReference>
<dbReference type="GO" id="GO:0005886">
    <property type="term" value="C:plasma membrane"/>
    <property type="evidence" value="ECO:0000318"/>
    <property type="project" value="GO_Central"/>
</dbReference>
<dbReference type="GO" id="GO:0004946">
    <property type="term" value="F:bombesin receptor activity"/>
    <property type="evidence" value="ECO:0007669"/>
    <property type="project" value="InterPro"/>
</dbReference>
<dbReference type="GO" id="GO:0008188">
    <property type="term" value="F:neuropeptide receptor activity"/>
    <property type="evidence" value="ECO:0000353"/>
    <property type="project" value="RGD"/>
</dbReference>
<dbReference type="GO" id="GO:0140374">
    <property type="term" value="P:antiviral innate immune response"/>
    <property type="evidence" value="ECO:0000250"/>
    <property type="project" value="UniProtKB"/>
</dbReference>
<dbReference type="GO" id="GO:0007186">
    <property type="term" value="P:G protein-coupled receptor signaling pathway"/>
    <property type="evidence" value="ECO:0000318"/>
    <property type="project" value="GO_Central"/>
</dbReference>
<dbReference type="GO" id="GO:0032715">
    <property type="term" value="P:negative regulation of interleukin-6 production"/>
    <property type="evidence" value="ECO:0000250"/>
    <property type="project" value="UniProtKB"/>
</dbReference>
<dbReference type="GO" id="GO:0032727">
    <property type="term" value="P:positive regulation of interferon-alpha production"/>
    <property type="evidence" value="ECO:0000266"/>
    <property type="project" value="RGD"/>
</dbReference>
<dbReference type="GO" id="GO:0090290">
    <property type="term" value="P:positive regulation of osteoclast proliferation"/>
    <property type="evidence" value="ECO:0000250"/>
    <property type="project" value="UniProtKB"/>
</dbReference>
<dbReference type="GO" id="GO:1903942">
    <property type="term" value="P:positive regulation of respiratory gaseous exchange"/>
    <property type="evidence" value="ECO:0000250"/>
    <property type="project" value="UniProtKB"/>
</dbReference>
<dbReference type="GO" id="GO:0160023">
    <property type="term" value="P:sneeze reflex"/>
    <property type="evidence" value="ECO:0000250"/>
    <property type="project" value="UniProtKB"/>
</dbReference>
<dbReference type="FunFam" id="1.20.1070.10:FF:000132">
    <property type="entry name" value="Neuromedin-B receptor"/>
    <property type="match status" value="1"/>
</dbReference>
<dbReference type="Gene3D" id="1.20.1070.10">
    <property type="entry name" value="Rhodopsin 7-helix transmembrane proteins"/>
    <property type="match status" value="1"/>
</dbReference>
<dbReference type="InterPro" id="IPR001556">
    <property type="entry name" value="Bombsn_rcpt-like"/>
</dbReference>
<dbReference type="InterPro" id="IPR000276">
    <property type="entry name" value="GPCR_Rhodpsn"/>
</dbReference>
<dbReference type="InterPro" id="IPR017452">
    <property type="entry name" value="GPCR_Rhodpsn_7TM"/>
</dbReference>
<dbReference type="InterPro" id="IPR001642">
    <property type="entry name" value="NeuroB_rcpt"/>
</dbReference>
<dbReference type="PANTHER" id="PTHR45695">
    <property type="entry name" value="LEUCOKININ RECEPTOR-RELATED"/>
    <property type="match status" value="1"/>
</dbReference>
<dbReference type="PANTHER" id="PTHR45695:SF8">
    <property type="entry name" value="NEUROMEDIN-B RECEPTOR"/>
    <property type="match status" value="1"/>
</dbReference>
<dbReference type="Pfam" id="PF00001">
    <property type="entry name" value="7tm_1"/>
    <property type="match status" value="1"/>
</dbReference>
<dbReference type="PRINTS" id="PR00358">
    <property type="entry name" value="BOMBESINR"/>
</dbReference>
<dbReference type="PRINTS" id="PR00237">
    <property type="entry name" value="GPCRRHODOPSN"/>
</dbReference>
<dbReference type="PRINTS" id="PR00639">
    <property type="entry name" value="NEUROMEDINBR"/>
</dbReference>
<dbReference type="SMART" id="SM01381">
    <property type="entry name" value="7TM_GPCR_Srsx"/>
    <property type="match status" value="1"/>
</dbReference>
<dbReference type="SUPFAM" id="SSF81321">
    <property type="entry name" value="Family A G protein-coupled receptor-like"/>
    <property type="match status" value="1"/>
</dbReference>
<dbReference type="PROSITE" id="PS00237">
    <property type="entry name" value="G_PROTEIN_RECEP_F1_1"/>
    <property type="match status" value="1"/>
</dbReference>
<dbReference type="PROSITE" id="PS50262">
    <property type="entry name" value="G_PROTEIN_RECEP_F1_2"/>
    <property type="match status" value="1"/>
</dbReference>
<evidence type="ECO:0000250" key="1">
    <source>
        <dbReference type="UniProtKB" id="O54799"/>
    </source>
</evidence>
<evidence type="ECO:0000250" key="2">
    <source>
        <dbReference type="UniProtKB" id="P21917"/>
    </source>
</evidence>
<evidence type="ECO:0000255" key="3"/>
<evidence type="ECO:0000255" key="4">
    <source>
        <dbReference type="PROSITE-ProRule" id="PRU00521"/>
    </source>
</evidence>
<evidence type="ECO:0000256" key="5">
    <source>
        <dbReference type="SAM" id="MobiDB-lite"/>
    </source>
</evidence>
<evidence type="ECO:0000269" key="6">
    <source>
    </source>
</evidence>
<evidence type="ECO:0000269" key="7">
    <source>
    </source>
</evidence>
<evidence type="ECO:0000305" key="8"/>
<proteinExistence type="evidence at transcript level"/>
<organism>
    <name type="scientific">Rattus norvegicus</name>
    <name type="common">Rat</name>
    <dbReference type="NCBI Taxonomy" id="10116"/>
    <lineage>
        <taxon>Eukaryota</taxon>
        <taxon>Metazoa</taxon>
        <taxon>Chordata</taxon>
        <taxon>Craniata</taxon>
        <taxon>Vertebrata</taxon>
        <taxon>Euteleostomi</taxon>
        <taxon>Mammalia</taxon>
        <taxon>Eutheria</taxon>
        <taxon>Euarchontoglires</taxon>
        <taxon>Glires</taxon>
        <taxon>Rodentia</taxon>
        <taxon>Myomorpha</taxon>
        <taxon>Muroidea</taxon>
        <taxon>Muridae</taxon>
        <taxon>Murinae</taxon>
        <taxon>Rattus</taxon>
    </lineage>
</organism>
<accession>P24053</accession>
<keyword id="KW-1003">Cell membrane</keyword>
<keyword id="KW-1015">Disulfide bond</keyword>
<keyword id="KW-0297">G-protein coupled receptor</keyword>
<keyword id="KW-0325">Glycoprotein</keyword>
<keyword id="KW-0449">Lipoprotein</keyword>
<keyword id="KW-0472">Membrane</keyword>
<keyword id="KW-0564">Palmitate</keyword>
<keyword id="KW-0597">Phosphoprotein</keyword>
<keyword id="KW-0675">Receptor</keyword>
<keyword id="KW-1185">Reference proteome</keyword>
<keyword id="KW-0807">Transducer</keyword>
<keyword id="KW-0812">Transmembrane</keyword>
<keyword id="KW-1133">Transmembrane helix</keyword>
<name>NMBR_RAT</name>
<gene>
    <name type="primary">Nmbr</name>
</gene>
<protein>
    <recommendedName>
        <fullName>Neuromedin-B receptor</fullName>
        <shortName>NMB-R</shortName>
    </recommendedName>
    <alternativeName>
        <fullName>Neuromedin-B-preferring bombesin receptor</fullName>
    </alternativeName>
</protein>
<comment type="function">
    <text evidence="1 6 7">Receptor for neuromedin-B (PubMed:1848080). Contributes to the maintenance of basal sigh rate through signaling in the pre-Botzinger complex, a cluster of several thousand neurons in the ventrolateral medulla responsible for inspiration during respiratory activity (PubMed:26855425). Contributes to the induction of sneezing following exposure to chemical irritants or allergens which causes release of NMB by nasal sensory neurons and activation of NMBR-expressing neurons in the sneeze-evoking region of the brainstem (By similarity). These in turn activate neurons of the caudal ventral respiratory group, giving rise to the sneezing response (By similarity). Contributes to induction of acute itch, possibly through its activation on dorsal root ganglion neurons by the NMB peptide (By similarity). Plays a role in the innate immune response to influenza A virus infection by enhancing interferon alpha expression and reducing expression of IL6 (By similarity). Plays a role in CSF1-induced proliferation of osteoclast precursors by contributing to the positive regulation of the expression of the CSF1 receptor CSF1R (By similarity).</text>
</comment>
<comment type="subcellular location">
    <subcellularLocation>
        <location evidence="8">Cell membrane</location>
        <topology evidence="3">Multi-pass membrane protein</topology>
    </subcellularLocation>
</comment>
<comment type="tissue specificity">
    <text>Brain (olfactory bulb and central thalamic regions), and esophagus.</text>
</comment>
<comment type="similarity">
    <text evidence="4">Belongs to the G-protein coupled receptor 1 family.</text>
</comment>
<sequence>MPPRSLPNLSLPTEASESELEPEVWENDFLPDSDGTTAELVIRCVIPSLYLIIISVGLLGNIMLVKIFLTNSTMRSVPNIFISNLAAGDLLLLLTCVPVDASRYFFDEWVFGKLGCKLIPAIQLTSVGVSVFTLTALSADRYRAIVNPMDMQTSGVVLWTSLKAVGIWVVSVLLAVPEAVFSEVARIGSSDNSSFTACIPYPQTDELHPKIHSVLIFLVYFLIPLVIISIYYYHIAKTLIRSAHNLPGEYNEHTKKQMETRKRLAKIVLVFVGCFVFCWFPNHILYLYRSFNYKEIDPSLGHMIVTLVARVLSFSNSCVNPFALYLLSESFRKHFNSQLCCGQKSYPERSTSYLLSSSAVRMTSLKSNAKNVVTNSVLLNGHSTKQEIAL</sequence>
<reference key="1">
    <citation type="journal article" date="1991" name="Neuron">
        <title>cDNA cloning, characterization, and brain region-specific expression of a neuromedin-B-preferring bombesin receptor.</title>
        <authorList>
            <person name="Wada E."/>
            <person name="Way J."/>
            <person name="Shapira H."/>
            <person name="Kusano K."/>
            <person name="Lebacq-Verheyden A.-M."/>
            <person name="Coy D."/>
            <person name="Jensen R."/>
            <person name="Battey J.F."/>
        </authorList>
    </citation>
    <scope>NUCLEOTIDE SEQUENCE [MRNA]</scope>
    <scope>FUNCTION</scope>
    <source>
        <tissue>Esophagus</tissue>
    </source>
</reference>
<reference key="2">
    <citation type="journal article" date="1993" name="J. Mol. Neurosci.">
        <title>Molecular cloning and characterization of receptors for the mammalian bombesin-like peptides.</title>
        <authorList>
            <person name="Giladi E."/>
            <person name="Nagalla S.R."/>
            <person name="Spindel E.R."/>
        </authorList>
    </citation>
    <scope>NUCLEOTIDE SEQUENCE [MRNA]</scope>
</reference>
<reference key="3">
    <citation type="journal article" date="2016" name="Nature">
        <title>The peptidergic control circuit for sighing.</title>
        <authorList>
            <person name="Li P."/>
            <person name="Janczewski W.A."/>
            <person name="Yackle K."/>
            <person name="Kam K."/>
            <person name="Pagliardini S."/>
            <person name="Krasnow M.A."/>
            <person name="Feldman J.L."/>
        </authorList>
    </citation>
    <scope>FUNCTION</scope>
</reference>